<feature type="propeptide" id="PRO_0000002503" evidence="1">
    <location>
        <begin position="1"/>
        <end position="5"/>
    </location>
</feature>
<feature type="chain" id="PRO_0000002504" description="Sodium/potassium-transporting ATPase subunit alpha-2">
    <location>
        <begin position="6"/>
        <end position="1020"/>
    </location>
</feature>
<feature type="topological domain" description="Cytoplasmic" evidence="6">
    <location>
        <begin position="6"/>
        <end position="85"/>
    </location>
</feature>
<feature type="transmembrane region" description="Helical" evidence="6">
    <location>
        <begin position="86"/>
        <end position="106"/>
    </location>
</feature>
<feature type="topological domain" description="Extracellular" evidence="6">
    <location>
        <begin position="107"/>
        <end position="129"/>
    </location>
</feature>
<feature type="transmembrane region" description="Helical" evidence="6">
    <location>
        <begin position="130"/>
        <end position="150"/>
    </location>
</feature>
<feature type="topological domain" description="Cytoplasmic" evidence="6">
    <location>
        <begin position="151"/>
        <end position="286"/>
    </location>
</feature>
<feature type="transmembrane region" description="Helical" evidence="6">
    <location>
        <begin position="287"/>
        <end position="306"/>
    </location>
</feature>
<feature type="topological domain" description="Extracellular" evidence="6">
    <location>
        <begin position="307"/>
        <end position="318"/>
    </location>
</feature>
<feature type="transmembrane region" description="Helical" evidence="6">
    <location>
        <begin position="319"/>
        <end position="336"/>
    </location>
</feature>
<feature type="topological domain" description="Cytoplasmic" evidence="6">
    <location>
        <begin position="337"/>
        <end position="769"/>
    </location>
</feature>
<feature type="transmembrane region" description="Helical" evidence="6">
    <location>
        <begin position="770"/>
        <end position="789"/>
    </location>
</feature>
<feature type="topological domain" description="Extracellular" evidence="6">
    <location>
        <begin position="790"/>
        <end position="799"/>
    </location>
</feature>
<feature type="transmembrane region" description="Helical" evidence="6">
    <location>
        <begin position="800"/>
        <end position="820"/>
    </location>
</feature>
<feature type="topological domain" description="Cytoplasmic" evidence="6">
    <location>
        <begin position="821"/>
        <end position="840"/>
    </location>
</feature>
<feature type="transmembrane region" description="Helical" evidence="6">
    <location>
        <begin position="841"/>
        <end position="863"/>
    </location>
</feature>
<feature type="topological domain" description="Extracellular" evidence="6">
    <location>
        <begin position="864"/>
        <end position="915"/>
    </location>
</feature>
<feature type="transmembrane region" description="Helical" evidence="6">
    <location>
        <begin position="916"/>
        <end position="935"/>
    </location>
</feature>
<feature type="topological domain" description="Cytoplasmic" evidence="6">
    <location>
        <begin position="936"/>
        <end position="948"/>
    </location>
</feature>
<feature type="transmembrane region" description="Helical" evidence="6">
    <location>
        <begin position="949"/>
        <end position="967"/>
    </location>
</feature>
<feature type="topological domain" description="Extracellular" evidence="6">
    <location>
        <begin position="968"/>
        <end position="982"/>
    </location>
</feature>
<feature type="transmembrane region" description="Helical" evidence="6">
    <location>
        <begin position="983"/>
        <end position="1003"/>
    </location>
</feature>
<feature type="topological domain" description="Cytoplasmic" evidence="6">
    <location>
        <begin position="1004"/>
        <end position="1020"/>
    </location>
</feature>
<feature type="region of interest" description="Disordered" evidence="7">
    <location>
        <begin position="1"/>
        <end position="31"/>
    </location>
</feature>
<feature type="region of interest" description="Interaction with phosphoinositide-3 kinase" evidence="1">
    <location>
        <begin position="80"/>
        <end position="82"/>
    </location>
</feature>
<feature type="region of interest" description="Disordered" evidence="7">
    <location>
        <begin position="212"/>
        <end position="231"/>
    </location>
</feature>
<feature type="compositionally biased region" description="Polar residues" evidence="7">
    <location>
        <begin position="212"/>
        <end position="227"/>
    </location>
</feature>
<feature type="active site" description="4-aspartylphosphate intermediate" evidence="1">
    <location>
        <position position="374"/>
    </location>
</feature>
<feature type="binding site" evidence="1">
    <location>
        <position position="714"/>
    </location>
    <ligand>
        <name>Mg(2+)</name>
        <dbReference type="ChEBI" id="CHEBI:18420"/>
    </ligand>
</feature>
<feature type="binding site" evidence="1">
    <location>
        <position position="718"/>
    </location>
    <ligand>
        <name>Mg(2+)</name>
        <dbReference type="ChEBI" id="CHEBI:18420"/>
    </ligand>
</feature>
<feature type="modified residue" description="Phosphoserine" evidence="5">
    <location>
        <position position="10"/>
    </location>
</feature>
<feature type="modified residue" description="Phosphoserine" evidence="3">
    <location>
        <position position="439"/>
    </location>
</feature>
<feature type="modified residue" description="Phosphoserine" evidence="5">
    <location>
        <position position="450"/>
    </location>
</feature>
<feature type="modified residue" description="Phosphoserine" evidence="3">
    <location>
        <position position="496"/>
    </location>
</feature>
<feature type="modified residue" description="Phosphoserine" evidence="5">
    <location>
        <position position="559"/>
    </location>
</feature>
<feature type="modified residue" description="Phosphothreonine" evidence="20">
    <location>
        <position position="570"/>
    </location>
</feature>
<feature type="modified residue" description="Phosphoserine" evidence="20">
    <location>
        <position position="587"/>
    </location>
</feature>
<feature type="modified residue" description="Phosphoserine" evidence="5">
    <location>
        <position position="672"/>
    </location>
</feature>
<feature type="modified residue" description="Phosphoserine" evidence="4">
    <location>
        <position position="826"/>
    </location>
</feature>
<feature type="modified residue" description="Phosphoserine; by PKA" evidence="1">
    <location>
        <position position="940"/>
    </location>
</feature>
<feature type="sequence variant" id="VAR_086441" description="In DEE98; decreased sodium/potassium-exchanging ATPase activity; decreased affinity for sodium ions; dbSNP:rs1553244746." evidence="17">
    <original>I</original>
    <variation>M</variation>
    <location>
        <position position="293"/>
    </location>
</feature>
<feature type="sequence variant" id="VAR_086442" description="In DEE98; dbSNP:rs1057521630." evidence="17">
    <original>C</original>
    <variation>F</variation>
    <location>
        <position position="341"/>
    </location>
</feature>
<feature type="sequence variant" id="VAR_078231" description="In DEE98; decreased affinity for sodium ions; decreased affinity for potassium ions; dbSNP:rs1057518514." evidence="14 17">
    <original>G</original>
    <variation>A</variation>
    <location>
        <position position="366"/>
    </location>
</feature>
<feature type="sequence variant" id="VAR_019934" description="In AHC1; dbSNP:rs28934002." evidence="10">
    <original>T</original>
    <variation>N</variation>
    <location>
        <position position="378"/>
    </location>
</feature>
<feature type="sequence variant" id="VAR_086443" description="Found in a patient with generalized tonic-clonic seizures; likely pathogenic; decreased sodium/potassium-exchanging ATPase activity; dbSNP:rs1553245178." evidence="17">
    <original>R</original>
    <variation>Q</variation>
    <location>
        <position position="593"/>
    </location>
</feature>
<feature type="sequence variant" id="VAR_078232" description="In DEE98; dbSNP:rs886039530." evidence="14">
    <original>R</original>
    <variation>W</variation>
    <location>
        <position position="593"/>
    </location>
</feature>
<feature type="sequence variant" id="VAR_019935" description="In FHM2; dbSNP:rs28933401." evidence="9">
    <original>R</original>
    <variation>Q</variation>
    <location>
        <position position="689"/>
    </location>
</feature>
<feature type="sequence variant" id="VAR_065685" description="In FHM2; de novo mutation in a sporadic case; dbSNP:rs1553245771." evidence="11">
    <original>G</original>
    <variation>R</variation>
    <location>
        <position position="715"/>
    </location>
</feature>
<feature type="sequence variant" id="VAR_019936" description="In FHM2; dbSNP:rs28933400." evidence="9">
    <original>M</original>
    <variation>T</variation>
    <location>
        <position position="731"/>
    </location>
</feature>
<feature type="sequence variant" id="VAR_019937" description="In FHM2; loss of function; dbSNP:rs28933398." evidence="8">
    <original>L</original>
    <variation>P</variation>
    <location>
        <position position="764"/>
    </location>
</feature>
<feature type="sequence variant" id="VAR_069991" description="In FHM2; some patients exhibit a clinical overlap between migraine and epilepsy; dbSNP:rs1651959213." evidence="13">
    <original>G</original>
    <variation>S</variation>
    <location>
        <position position="874"/>
    </location>
</feature>
<feature type="sequence variant" id="VAR_019938" description="In FHM2; loss of function; dbSNP:rs28933399." evidence="8">
    <original>W</original>
    <variation>R</variation>
    <location>
        <position position="887"/>
    </location>
</feature>
<feature type="sequence variant" id="VAR_086444" description="In DEE98; decreased sodium/potassium-exchanging ATPase activity; dbSNP:rs2101996488." evidence="17">
    <original>R</original>
    <variation>Q</variation>
    <location>
        <position position="908"/>
    </location>
</feature>
<feature type="sequence variant" id="VAR_086445" description="In FARIMPD; uncertain significance." evidence="16">
    <location>
        <begin position="957"/>
        <end position="1020"/>
    </location>
</feature>
<feature type="sequence variant" id="VAR_069992" description="In FHM2; some patients exhibit a clinical overlap between migraine and epilepsy; dbSNP:rs746795369." evidence="12">
    <original>R</original>
    <variation>W</variation>
    <location>
        <position position="1007"/>
    </location>
</feature>
<organism>
    <name type="scientific">Homo sapiens</name>
    <name type="common">Human</name>
    <dbReference type="NCBI Taxonomy" id="9606"/>
    <lineage>
        <taxon>Eukaryota</taxon>
        <taxon>Metazoa</taxon>
        <taxon>Chordata</taxon>
        <taxon>Craniata</taxon>
        <taxon>Vertebrata</taxon>
        <taxon>Euteleostomi</taxon>
        <taxon>Mammalia</taxon>
        <taxon>Eutheria</taxon>
        <taxon>Euarchontoglires</taxon>
        <taxon>Primates</taxon>
        <taxon>Haplorrhini</taxon>
        <taxon>Catarrhini</taxon>
        <taxon>Hominidae</taxon>
        <taxon>Homo</taxon>
    </lineage>
</organism>
<dbReference type="EC" id="7.2.2.13"/>
<dbReference type="EMBL" id="J05096">
    <property type="protein sequence ID" value="AAA51797.1"/>
    <property type="molecule type" value="Genomic_DNA"/>
</dbReference>
<dbReference type="EMBL" id="AB018321">
    <property type="protein sequence ID" value="BAA34498.2"/>
    <property type="status" value="ALT_INIT"/>
    <property type="molecule type" value="mRNA"/>
</dbReference>
<dbReference type="EMBL" id="AL121987">
    <property type="status" value="NOT_ANNOTATED_CDS"/>
    <property type="molecule type" value="Genomic_DNA"/>
</dbReference>
<dbReference type="EMBL" id="CH471121">
    <property type="protein sequence ID" value="EAW52740.1"/>
    <property type="molecule type" value="Genomic_DNA"/>
</dbReference>
<dbReference type="EMBL" id="CH471121">
    <property type="protein sequence ID" value="EAW52741.1"/>
    <property type="molecule type" value="Genomic_DNA"/>
</dbReference>
<dbReference type="EMBL" id="BC052271">
    <property type="protein sequence ID" value="AAH52271.2"/>
    <property type="molecule type" value="mRNA"/>
</dbReference>
<dbReference type="EMBL" id="M16795">
    <property type="protein sequence ID" value="AAA51799.1"/>
    <property type="molecule type" value="mRNA"/>
</dbReference>
<dbReference type="EMBL" id="M27578">
    <property type="protein sequence ID" value="AAA35575.1"/>
    <property type="molecule type" value="Genomic_DNA"/>
</dbReference>
<dbReference type="EMBL" id="M27571">
    <property type="protein sequence ID" value="AAA35575.1"/>
    <property type="status" value="JOINED"/>
    <property type="molecule type" value="Genomic_DNA"/>
</dbReference>
<dbReference type="EMBL" id="M27576">
    <property type="protein sequence ID" value="AAA35575.1"/>
    <property type="status" value="JOINED"/>
    <property type="molecule type" value="Genomic_DNA"/>
</dbReference>
<dbReference type="EMBL" id="Y07494">
    <property type="protein sequence ID" value="CAA68793.1"/>
    <property type="status" value="ALT_SEQ"/>
    <property type="molecule type" value="mRNA"/>
</dbReference>
<dbReference type="CCDS" id="CCDS1196.1"/>
<dbReference type="PIR" id="A34474">
    <property type="entry name" value="A34474"/>
</dbReference>
<dbReference type="RefSeq" id="NP_000693.1">
    <property type="nucleotide sequence ID" value="NM_000702.4"/>
</dbReference>
<dbReference type="SMR" id="P50993"/>
<dbReference type="BioGRID" id="106967">
    <property type="interactions" value="49"/>
</dbReference>
<dbReference type="CORUM" id="P50993"/>
<dbReference type="FunCoup" id="P50993">
    <property type="interactions" value="831"/>
</dbReference>
<dbReference type="IntAct" id="P50993">
    <property type="interactions" value="31"/>
</dbReference>
<dbReference type="MINT" id="P50993"/>
<dbReference type="STRING" id="9606.ENSP00000354490"/>
<dbReference type="BindingDB" id="P50993"/>
<dbReference type="ChEMBL" id="CHEMBL2095186"/>
<dbReference type="DrugBank" id="DB09020">
    <property type="generic name" value="Bisacodyl"/>
</dbReference>
<dbReference type="DrugBank" id="DB01396">
    <property type="generic name" value="Digitoxin"/>
</dbReference>
<dbReference type="DrugBank" id="DB00390">
    <property type="generic name" value="Digoxin"/>
</dbReference>
<dbReference type="DrugBank" id="DB06157">
    <property type="generic name" value="Istaroxime"/>
</dbReference>
<dbReference type="DrugBank" id="DB12843">
    <property type="generic name" value="Oleandrin"/>
</dbReference>
<dbReference type="DrugBank" id="DB01250">
    <property type="generic name" value="Olsalazine"/>
</dbReference>
<dbReference type="DrugBank" id="DB01092">
    <property type="generic name" value="Ouabain"/>
</dbReference>
<dbReference type="DrugBank" id="DB12350">
    <property type="generic name" value="Rostafuroxin"/>
</dbReference>
<dbReference type="DrugBank" id="DB09479">
    <property type="generic name" value="Rubidium Rb-82"/>
</dbReference>
<dbReference type="DrugBank" id="DB16690">
    <property type="generic name" value="Tegoprazan"/>
</dbReference>
<dbReference type="DrugCentral" id="P50993"/>
<dbReference type="TCDB" id="3.A.3.1.1">
    <property type="family name" value="the p-type atpase (p-atpase) superfamily"/>
</dbReference>
<dbReference type="GlyCosmos" id="P50993">
    <property type="glycosylation" value="1 site, 1 glycan"/>
</dbReference>
<dbReference type="GlyGen" id="P50993">
    <property type="glycosylation" value="1 site, 1 O-linked glycan (1 site)"/>
</dbReference>
<dbReference type="iPTMnet" id="P50993"/>
<dbReference type="PhosphoSitePlus" id="P50993"/>
<dbReference type="SwissPalm" id="P50993"/>
<dbReference type="BioMuta" id="ATP1A2"/>
<dbReference type="DMDM" id="1703467"/>
<dbReference type="jPOST" id="P50993"/>
<dbReference type="MassIVE" id="P50993"/>
<dbReference type="PaxDb" id="9606-ENSP00000354490"/>
<dbReference type="PeptideAtlas" id="P50993"/>
<dbReference type="ProteomicsDB" id="56274"/>
<dbReference type="Pumba" id="P50993"/>
<dbReference type="Antibodypedia" id="34270">
    <property type="antibodies" value="165 antibodies from 27 providers"/>
</dbReference>
<dbReference type="DNASU" id="477"/>
<dbReference type="Ensembl" id="ENST00000361216.8">
    <property type="protein sequence ID" value="ENSP00000354490.3"/>
    <property type="gene ID" value="ENSG00000018625.15"/>
</dbReference>
<dbReference type="GeneID" id="477"/>
<dbReference type="KEGG" id="hsa:477"/>
<dbReference type="MANE-Select" id="ENST00000361216.8">
    <property type="protein sequence ID" value="ENSP00000354490.3"/>
    <property type="RefSeq nucleotide sequence ID" value="NM_000702.4"/>
    <property type="RefSeq protein sequence ID" value="NP_000693.1"/>
</dbReference>
<dbReference type="UCSC" id="uc001fvc.4">
    <property type="organism name" value="human"/>
</dbReference>
<dbReference type="AGR" id="HGNC:800"/>
<dbReference type="CTD" id="477"/>
<dbReference type="DisGeNET" id="477"/>
<dbReference type="GeneCards" id="ATP1A2"/>
<dbReference type="GeneReviews" id="ATP1A2"/>
<dbReference type="HGNC" id="HGNC:800">
    <property type="gene designation" value="ATP1A2"/>
</dbReference>
<dbReference type="HPA" id="ENSG00000018625">
    <property type="expression patterns" value="Group enriched (brain, skeletal muscle, tongue)"/>
</dbReference>
<dbReference type="MalaCards" id="ATP1A2"/>
<dbReference type="MIM" id="104290">
    <property type="type" value="phenotype"/>
</dbReference>
<dbReference type="MIM" id="182340">
    <property type="type" value="gene"/>
</dbReference>
<dbReference type="MIM" id="602481">
    <property type="type" value="phenotype"/>
</dbReference>
<dbReference type="MIM" id="619602">
    <property type="type" value="phenotype"/>
</dbReference>
<dbReference type="MIM" id="619605">
    <property type="type" value="phenotype"/>
</dbReference>
<dbReference type="neXtProt" id="NX_P50993"/>
<dbReference type="OpenTargets" id="ENSG00000018625"/>
<dbReference type="Orphanet" id="2131">
    <property type="disease" value="Alternating hemiplegia of childhood"/>
</dbReference>
<dbReference type="Orphanet" id="569">
    <property type="disease" value="Familial or sporadic hemiplegic migraine"/>
</dbReference>
<dbReference type="Orphanet" id="442835">
    <property type="disease" value="Non-specific early-onset epileptic encephalopathy"/>
</dbReference>
<dbReference type="PharmGKB" id="PA30796"/>
<dbReference type="VEuPathDB" id="HostDB:ENSG00000018625"/>
<dbReference type="eggNOG" id="KOG0203">
    <property type="taxonomic scope" value="Eukaryota"/>
</dbReference>
<dbReference type="GeneTree" id="ENSGT00940000159936"/>
<dbReference type="InParanoid" id="P50993"/>
<dbReference type="OMA" id="ISWEWAL"/>
<dbReference type="OrthoDB" id="3352408at2759"/>
<dbReference type="PAN-GO" id="P50993">
    <property type="GO annotations" value="9 GO annotations based on evolutionary models"/>
</dbReference>
<dbReference type="PhylomeDB" id="P50993"/>
<dbReference type="TreeFam" id="TF312838"/>
<dbReference type="PathwayCommons" id="P50993"/>
<dbReference type="Reactome" id="R-HSA-5578775">
    <property type="pathway name" value="Ion homeostasis"/>
</dbReference>
<dbReference type="Reactome" id="R-HSA-936837">
    <property type="pathway name" value="Ion transport by P-type ATPases"/>
</dbReference>
<dbReference type="Reactome" id="R-HSA-9679191">
    <property type="pathway name" value="Potential therapeutics for SARS"/>
</dbReference>
<dbReference type="SignaLink" id="P50993"/>
<dbReference type="BioGRID-ORCS" id="477">
    <property type="hits" value="17 hits in 1148 CRISPR screens"/>
</dbReference>
<dbReference type="CD-CODE" id="FB4E32DD">
    <property type="entry name" value="Presynaptic clusters and postsynaptic densities"/>
</dbReference>
<dbReference type="ChiTaRS" id="ATP1A2">
    <property type="organism name" value="human"/>
</dbReference>
<dbReference type="GeneWiki" id="ATP1A2"/>
<dbReference type="GenomeRNAi" id="477"/>
<dbReference type="Pharos" id="P50993">
    <property type="development level" value="Tclin"/>
</dbReference>
<dbReference type="PRO" id="PR:P50993"/>
<dbReference type="Proteomes" id="UP000005640">
    <property type="component" value="Chromosome 1"/>
</dbReference>
<dbReference type="RNAct" id="P50993">
    <property type="molecule type" value="protein"/>
</dbReference>
<dbReference type="Bgee" id="ENSG00000018625">
    <property type="expression patterns" value="Expressed in lateral globus pallidus and 184 other cell types or tissues"/>
</dbReference>
<dbReference type="ExpressionAtlas" id="P50993">
    <property type="expression patterns" value="baseline and differential"/>
</dbReference>
<dbReference type="GO" id="GO:0005901">
    <property type="term" value="C:caveola"/>
    <property type="evidence" value="ECO:0007669"/>
    <property type="project" value="Ensembl"/>
</dbReference>
<dbReference type="GO" id="GO:0042995">
    <property type="term" value="C:cell projection"/>
    <property type="evidence" value="ECO:0000250"/>
    <property type="project" value="ARUK-UCL"/>
</dbReference>
<dbReference type="GO" id="GO:0009986">
    <property type="term" value="C:cell surface"/>
    <property type="evidence" value="ECO:0007669"/>
    <property type="project" value="Ensembl"/>
</dbReference>
<dbReference type="GO" id="GO:0005737">
    <property type="term" value="C:cytoplasm"/>
    <property type="evidence" value="ECO:0000314"/>
    <property type="project" value="UniProtKB"/>
</dbReference>
<dbReference type="GO" id="GO:0043197">
    <property type="term" value="C:dendritic spine"/>
    <property type="evidence" value="ECO:0007669"/>
    <property type="project" value="Ensembl"/>
</dbReference>
<dbReference type="GO" id="GO:0005783">
    <property type="term" value="C:endoplasmic reticulum"/>
    <property type="evidence" value="ECO:0007669"/>
    <property type="project" value="Ensembl"/>
</dbReference>
<dbReference type="GO" id="GO:0005768">
    <property type="term" value="C:endosome"/>
    <property type="evidence" value="ECO:0007669"/>
    <property type="project" value="Ensembl"/>
</dbReference>
<dbReference type="GO" id="GO:1903561">
    <property type="term" value="C:extracellular vesicle"/>
    <property type="evidence" value="ECO:0007005"/>
    <property type="project" value="UniProtKB"/>
</dbReference>
<dbReference type="GO" id="GO:0014704">
    <property type="term" value="C:intercalated disc"/>
    <property type="evidence" value="ECO:0007669"/>
    <property type="project" value="Ensembl"/>
</dbReference>
<dbReference type="GO" id="GO:0016020">
    <property type="term" value="C:membrane"/>
    <property type="evidence" value="ECO:0000314"/>
    <property type="project" value="BHF-UCL"/>
</dbReference>
<dbReference type="GO" id="GO:0043025">
    <property type="term" value="C:neuronal cell body"/>
    <property type="evidence" value="ECO:0000250"/>
    <property type="project" value="ARUK-UCL"/>
</dbReference>
<dbReference type="GO" id="GO:0031090">
    <property type="term" value="C:organelle membrane"/>
    <property type="evidence" value="ECO:0000316"/>
    <property type="project" value="ARUK-UCL"/>
</dbReference>
<dbReference type="GO" id="GO:0005886">
    <property type="term" value="C:plasma membrane"/>
    <property type="evidence" value="ECO:0000314"/>
    <property type="project" value="UniProtKB"/>
</dbReference>
<dbReference type="GO" id="GO:0005890">
    <property type="term" value="C:sodium:potassium-exchanging ATPase complex"/>
    <property type="evidence" value="ECO:0000314"/>
    <property type="project" value="BHF-UCL"/>
</dbReference>
<dbReference type="GO" id="GO:0030315">
    <property type="term" value="C:T-tubule"/>
    <property type="evidence" value="ECO:0000316"/>
    <property type="project" value="ARUK-UCL"/>
</dbReference>
<dbReference type="GO" id="GO:0005524">
    <property type="term" value="F:ATP binding"/>
    <property type="evidence" value="ECO:0000315"/>
    <property type="project" value="BHF-UCL"/>
</dbReference>
<dbReference type="GO" id="GO:0016887">
    <property type="term" value="F:ATP hydrolysis activity"/>
    <property type="evidence" value="ECO:0000315"/>
    <property type="project" value="BHF-UCL"/>
</dbReference>
<dbReference type="GO" id="GO:0019829">
    <property type="term" value="F:ATPase-coupled monoatomic cation transmembrane transporter activity"/>
    <property type="evidence" value="ECO:0000314"/>
    <property type="project" value="ARUK-UCL"/>
</dbReference>
<dbReference type="GO" id="GO:0005391">
    <property type="term" value="F:P-type sodium:potassium-exchanging transporter activity"/>
    <property type="evidence" value="ECO:0000314"/>
    <property type="project" value="BHF-UCL"/>
</dbReference>
<dbReference type="GO" id="GO:0016791">
    <property type="term" value="F:phosphatase activity"/>
    <property type="evidence" value="ECO:0000250"/>
    <property type="project" value="ARUK-UCL"/>
</dbReference>
<dbReference type="GO" id="GO:0030955">
    <property type="term" value="F:potassium ion binding"/>
    <property type="evidence" value="ECO:0000315"/>
    <property type="project" value="BHF-UCL"/>
</dbReference>
<dbReference type="GO" id="GO:0046982">
    <property type="term" value="F:protein heterodimerization activity"/>
    <property type="evidence" value="ECO:0000250"/>
    <property type="project" value="ARUK-UCL"/>
</dbReference>
<dbReference type="GO" id="GO:0051087">
    <property type="term" value="F:protein-folding chaperone binding"/>
    <property type="evidence" value="ECO:0000353"/>
    <property type="project" value="BHF-UCL"/>
</dbReference>
<dbReference type="GO" id="GO:0031402">
    <property type="term" value="F:sodium ion binding"/>
    <property type="evidence" value="ECO:0000315"/>
    <property type="project" value="BHF-UCL"/>
</dbReference>
<dbReference type="GO" id="GO:0005496">
    <property type="term" value="F:steroid binding"/>
    <property type="evidence" value="ECO:0000353"/>
    <property type="project" value="BHF-UCL"/>
</dbReference>
<dbReference type="GO" id="GO:1990239">
    <property type="term" value="F:steroid hormone binding"/>
    <property type="evidence" value="ECO:0000314"/>
    <property type="project" value="BHF-UCL"/>
</dbReference>
<dbReference type="GO" id="GO:0008344">
    <property type="term" value="P:adult locomotory behavior"/>
    <property type="evidence" value="ECO:0007669"/>
    <property type="project" value="Ensembl"/>
</dbReference>
<dbReference type="GO" id="GO:0021764">
    <property type="term" value="P:amygdala development"/>
    <property type="evidence" value="ECO:0000250"/>
    <property type="project" value="ARUK-UCL"/>
</dbReference>
<dbReference type="GO" id="GO:0046034">
    <property type="term" value="P:ATP metabolic process"/>
    <property type="evidence" value="ECO:0000315"/>
    <property type="project" value="BHF-UCL"/>
</dbReference>
<dbReference type="GO" id="GO:0001662">
    <property type="term" value="P:behavioral fear response"/>
    <property type="evidence" value="ECO:0000250"/>
    <property type="project" value="ARUK-UCL"/>
</dbReference>
<dbReference type="GO" id="GO:0060048">
    <property type="term" value="P:cardiac muscle contraction"/>
    <property type="evidence" value="ECO:0000304"/>
    <property type="project" value="BHF-UCL"/>
</dbReference>
<dbReference type="GO" id="GO:0086064">
    <property type="term" value="P:cell communication by electrical coupling involved in cardiac conduction"/>
    <property type="evidence" value="ECO:0000304"/>
    <property type="project" value="BHF-UCL"/>
</dbReference>
<dbReference type="GO" id="GO:0071260">
    <property type="term" value="P:cellular response to mechanical stimulus"/>
    <property type="evidence" value="ECO:0007669"/>
    <property type="project" value="Ensembl"/>
</dbReference>
<dbReference type="GO" id="GO:0071383">
    <property type="term" value="P:cellular response to steroid hormone stimulus"/>
    <property type="evidence" value="ECO:0000314"/>
    <property type="project" value="BHF-UCL"/>
</dbReference>
<dbReference type="GO" id="GO:0030007">
    <property type="term" value="P:intracellular potassium ion homeostasis"/>
    <property type="evidence" value="ECO:0000314"/>
    <property type="project" value="BHF-UCL"/>
</dbReference>
<dbReference type="GO" id="GO:0006883">
    <property type="term" value="P:intracellular sodium ion homeostasis"/>
    <property type="evidence" value="ECO:0000314"/>
    <property type="project" value="BHF-UCL"/>
</dbReference>
<dbReference type="GO" id="GO:0019852">
    <property type="term" value="P:L-ascorbic acid metabolic process"/>
    <property type="evidence" value="ECO:0007669"/>
    <property type="project" value="Ensembl"/>
</dbReference>
<dbReference type="GO" id="GO:0040011">
    <property type="term" value="P:locomotion"/>
    <property type="evidence" value="ECO:0000250"/>
    <property type="project" value="ARUK-UCL"/>
</dbReference>
<dbReference type="GO" id="GO:0035641">
    <property type="term" value="P:locomotory exploration behavior"/>
    <property type="evidence" value="ECO:0000250"/>
    <property type="project" value="ARUK-UCL"/>
</dbReference>
<dbReference type="GO" id="GO:0086012">
    <property type="term" value="P:membrane depolarization during cardiac muscle cell action potential"/>
    <property type="evidence" value="ECO:0000304"/>
    <property type="project" value="BHF-UCL"/>
</dbReference>
<dbReference type="GO" id="GO:0086009">
    <property type="term" value="P:membrane repolarization"/>
    <property type="evidence" value="ECO:0000304"/>
    <property type="project" value="BHF-UCL"/>
</dbReference>
<dbReference type="GO" id="GO:0098655">
    <property type="term" value="P:monoatomic cation transmembrane transport"/>
    <property type="evidence" value="ECO:0000314"/>
    <property type="project" value="ARUK-UCL"/>
</dbReference>
<dbReference type="GO" id="GO:1903170">
    <property type="term" value="P:negative regulation of calcium ion transmembrane transport"/>
    <property type="evidence" value="ECO:0000250"/>
    <property type="project" value="BHF-UCL"/>
</dbReference>
<dbReference type="GO" id="GO:0051481">
    <property type="term" value="P:negative regulation of cytosolic calcium ion concentration"/>
    <property type="evidence" value="ECO:0000250"/>
    <property type="project" value="ARUK-UCL"/>
</dbReference>
<dbReference type="GO" id="GO:0045822">
    <property type="term" value="P:negative regulation of heart contraction"/>
    <property type="evidence" value="ECO:0000250"/>
    <property type="project" value="ARUK-UCL"/>
</dbReference>
<dbReference type="GO" id="GO:0045988">
    <property type="term" value="P:negative regulation of striated muscle contraction"/>
    <property type="evidence" value="ECO:0007669"/>
    <property type="project" value="Ensembl"/>
</dbReference>
<dbReference type="GO" id="GO:0019227">
    <property type="term" value="P:neuronal action potential propagation"/>
    <property type="evidence" value="ECO:0007669"/>
    <property type="project" value="Ensembl"/>
</dbReference>
<dbReference type="GO" id="GO:0001504">
    <property type="term" value="P:neurotransmitter uptake"/>
    <property type="evidence" value="ECO:0000250"/>
    <property type="project" value="ARUK-UCL"/>
</dbReference>
<dbReference type="GO" id="GO:0021989">
    <property type="term" value="P:olfactory cortex development"/>
    <property type="evidence" value="ECO:0000250"/>
    <property type="project" value="ARUK-UCL"/>
</dbReference>
<dbReference type="GO" id="GO:0045823">
    <property type="term" value="P:positive regulation of heart contraction"/>
    <property type="evidence" value="ECO:0000250"/>
    <property type="project" value="ARUK-UCL"/>
</dbReference>
<dbReference type="GO" id="GO:1990573">
    <property type="term" value="P:potassium ion import across plasma membrane"/>
    <property type="evidence" value="ECO:0000314"/>
    <property type="project" value="BHF-UCL"/>
</dbReference>
<dbReference type="GO" id="GO:0071805">
    <property type="term" value="P:potassium ion transmembrane transport"/>
    <property type="evidence" value="ECO:0000316"/>
    <property type="project" value="ARUK-UCL"/>
</dbReference>
<dbReference type="GO" id="GO:0006813">
    <property type="term" value="P:potassium ion transport"/>
    <property type="evidence" value="ECO:0000303"/>
    <property type="project" value="UniProtKB"/>
</dbReference>
<dbReference type="GO" id="GO:1902600">
    <property type="term" value="P:proton transmembrane transport"/>
    <property type="evidence" value="ECO:0000318"/>
    <property type="project" value="GO_Central"/>
</dbReference>
<dbReference type="GO" id="GO:0008217">
    <property type="term" value="P:regulation of blood pressure"/>
    <property type="evidence" value="ECO:0007669"/>
    <property type="project" value="Ensembl"/>
</dbReference>
<dbReference type="GO" id="GO:0086004">
    <property type="term" value="P:regulation of cardiac muscle cell contraction"/>
    <property type="evidence" value="ECO:0007669"/>
    <property type="project" value="Ensembl"/>
</dbReference>
<dbReference type="GO" id="GO:0010881">
    <property type="term" value="P:regulation of cardiac muscle contraction by regulation of the release of sequestered calcium ion"/>
    <property type="evidence" value="ECO:0000304"/>
    <property type="project" value="BHF-UCL"/>
</dbReference>
<dbReference type="GO" id="GO:0051946">
    <property type="term" value="P:regulation of glutamate uptake involved in transmission of nerve impulse"/>
    <property type="evidence" value="ECO:0000303"/>
    <property type="project" value="BHF-UCL"/>
</dbReference>
<dbReference type="GO" id="GO:0006937">
    <property type="term" value="P:regulation of muscle contraction"/>
    <property type="evidence" value="ECO:0000250"/>
    <property type="project" value="ARUK-UCL"/>
</dbReference>
<dbReference type="GO" id="GO:0002087">
    <property type="term" value="P:regulation of respiratory gaseous exchange by nervous system process"/>
    <property type="evidence" value="ECO:0000250"/>
    <property type="project" value="ARUK-UCL"/>
</dbReference>
<dbReference type="GO" id="GO:0006940">
    <property type="term" value="P:regulation of smooth muscle contraction"/>
    <property type="evidence" value="ECO:0007669"/>
    <property type="project" value="Ensembl"/>
</dbReference>
<dbReference type="GO" id="GO:0006942">
    <property type="term" value="P:regulation of striated muscle contraction"/>
    <property type="evidence" value="ECO:0000303"/>
    <property type="project" value="UniProtKB"/>
</dbReference>
<dbReference type="GO" id="GO:0051966">
    <property type="term" value="P:regulation of synaptic transmission, glutamatergic"/>
    <property type="evidence" value="ECO:0000303"/>
    <property type="project" value="BHF-UCL"/>
</dbReference>
<dbReference type="GO" id="GO:0002026">
    <property type="term" value="P:regulation of the force of heart contraction"/>
    <property type="evidence" value="ECO:0000250"/>
    <property type="project" value="ARUK-UCL"/>
</dbReference>
<dbReference type="GO" id="GO:0019229">
    <property type="term" value="P:regulation of vasoconstriction"/>
    <property type="evidence" value="ECO:0007669"/>
    <property type="project" value="Ensembl"/>
</dbReference>
<dbReference type="GO" id="GO:0055119">
    <property type="term" value="P:relaxation of cardiac muscle"/>
    <property type="evidence" value="ECO:0000304"/>
    <property type="project" value="BHF-UCL"/>
</dbReference>
<dbReference type="GO" id="GO:0010996">
    <property type="term" value="P:response to auditory stimulus"/>
    <property type="evidence" value="ECO:0000250"/>
    <property type="project" value="ARUK-UCL"/>
</dbReference>
<dbReference type="GO" id="GO:1903416">
    <property type="term" value="P:response to glycoside"/>
    <property type="evidence" value="ECO:0000250"/>
    <property type="project" value="BHF-UCL"/>
</dbReference>
<dbReference type="GO" id="GO:0035094">
    <property type="term" value="P:response to nicotine"/>
    <property type="evidence" value="ECO:0007669"/>
    <property type="project" value="Ensembl"/>
</dbReference>
<dbReference type="GO" id="GO:0035864">
    <property type="term" value="P:response to potassium ion"/>
    <property type="evidence" value="ECO:0007669"/>
    <property type="project" value="Ensembl"/>
</dbReference>
<dbReference type="GO" id="GO:0036376">
    <property type="term" value="P:sodium ion export across plasma membrane"/>
    <property type="evidence" value="ECO:0000314"/>
    <property type="project" value="BHF-UCL"/>
</dbReference>
<dbReference type="GO" id="GO:0035725">
    <property type="term" value="P:sodium ion transmembrane transport"/>
    <property type="evidence" value="ECO:0000316"/>
    <property type="project" value="ARUK-UCL"/>
</dbReference>
<dbReference type="GO" id="GO:0006814">
    <property type="term" value="P:sodium ion transport"/>
    <property type="evidence" value="ECO:0000303"/>
    <property type="project" value="UniProtKB"/>
</dbReference>
<dbReference type="GO" id="GO:0150104">
    <property type="term" value="P:transport across blood-brain barrier"/>
    <property type="evidence" value="ECO:0000303"/>
    <property type="project" value="ARUK-UCL"/>
</dbReference>
<dbReference type="GO" id="GO:0008542">
    <property type="term" value="P:visual learning"/>
    <property type="evidence" value="ECO:0007669"/>
    <property type="project" value="Ensembl"/>
</dbReference>
<dbReference type="CDD" id="cd02608">
    <property type="entry name" value="P-type_ATPase_Na-K_like"/>
    <property type="match status" value="1"/>
</dbReference>
<dbReference type="FunFam" id="2.70.150.10:FF:000142">
    <property type="entry name" value="Na/K ATPase alpha 2 subunit"/>
    <property type="match status" value="1"/>
</dbReference>
<dbReference type="FunFam" id="2.70.150.10:FF:000106">
    <property type="entry name" value="Sodium/potassium-transporting ATPase subunit alpha"/>
    <property type="match status" value="1"/>
</dbReference>
<dbReference type="FunFam" id="3.40.1110.10:FF:000001">
    <property type="entry name" value="Sodium/potassium-transporting ATPase subunit alpha"/>
    <property type="match status" value="1"/>
</dbReference>
<dbReference type="FunFam" id="3.40.50.1000:FF:000004">
    <property type="entry name" value="Sodium/potassium-transporting ATPase subunit alpha"/>
    <property type="match status" value="1"/>
</dbReference>
<dbReference type="FunFam" id="1.20.1110.10:FF:000095">
    <property type="entry name" value="Sodium/potassium-transporting ATPase subunit alpha-1"/>
    <property type="match status" value="2"/>
</dbReference>
<dbReference type="Gene3D" id="3.40.1110.10">
    <property type="entry name" value="Calcium-transporting ATPase, cytoplasmic domain N"/>
    <property type="match status" value="1"/>
</dbReference>
<dbReference type="Gene3D" id="2.70.150.10">
    <property type="entry name" value="Calcium-transporting ATPase, cytoplasmic transduction domain A"/>
    <property type="match status" value="1"/>
</dbReference>
<dbReference type="Gene3D" id="1.20.1110.10">
    <property type="entry name" value="Calcium-transporting ATPase, transmembrane domain"/>
    <property type="match status" value="1"/>
</dbReference>
<dbReference type="Gene3D" id="3.40.50.1000">
    <property type="entry name" value="HAD superfamily/HAD-like"/>
    <property type="match status" value="1"/>
</dbReference>
<dbReference type="InterPro" id="IPR006068">
    <property type="entry name" value="ATPase_P-typ_cation-transptr_C"/>
</dbReference>
<dbReference type="InterPro" id="IPR004014">
    <property type="entry name" value="ATPase_P-typ_cation-transptr_N"/>
</dbReference>
<dbReference type="InterPro" id="IPR023299">
    <property type="entry name" value="ATPase_P-typ_cyto_dom_N"/>
</dbReference>
<dbReference type="InterPro" id="IPR018303">
    <property type="entry name" value="ATPase_P-typ_P_site"/>
</dbReference>
<dbReference type="InterPro" id="IPR023298">
    <property type="entry name" value="ATPase_P-typ_TM_dom_sf"/>
</dbReference>
<dbReference type="InterPro" id="IPR008250">
    <property type="entry name" value="ATPase_P-typ_transduc_dom_A_sf"/>
</dbReference>
<dbReference type="InterPro" id="IPR050510">
    <property type="entry name" value="Cation_transp_ATPase_P-type"/>
</dbReference>
<dbReference type="InterPro" id="IPR036412">
    <property type="entry name" value="HAD-like_sf"/>
</dbReference>
<dbReference type="InterPro" id="IPR023214">
    <property type="entry name" value="HAD_sf"/>
</dbReference>
<dbReference type="InterPro" id="IPR005775">
    <property type="entry name" value="P-type_ATPase_IIC"/>
</dbReference>
<dbReference type="InterPro" id="IPR001757">
    <property type="entry name" value="P_typ_ATPase"/>
</dbReference>
<dbReference type="InterPro" id="IPR044492">
    <property type="entry name" value="P_typ_ATPase_HD_dom"/>
</dbReference>
<dbReference type="NCBIfam" id="TIGR01106">
    <property type="entry name" value="ATPase-IIC_X-K"/>
    <property type="match status" value="1"/>
</dbReference>
<dbReference type="NCBIfam" id="TIGR01494">
    <property type="entry name" value="ATPase_P-type"/>
    <property type="match status" value="2"/>
</dbReference>
<dbReference type="PANTHER" id="PTHR43294">
    <property type="entry name" value="SODIUM/POTASSIUM-TRANSPORTING ATPASE SUBUNIT ALPHA"/>
    <property type="match status" value="1"/>
</dbReference>
<dbReference type="PANTHER" id="PTHR43294:SF6">
    <property type="entry name" value="SODIUM_POTASSIUM-TRANSPORTING ATPASE SUBUNIT ALPHA-2"/>
    <property type="match status" value="1"/>
</dbReference>
<dbReference type="Pfam" id="PF13246">
    <property type="entry name" value="Cation_ATPase"/>
    <property type="match status" value="1"/>
</dbReference>
<dbReference type="Pfam" id="PF00689">
    <property type="entry name" value="Cation_ATPase_C"/>
    <property type="match status" value="1"/>
</dbReference>
<dbReference type="Pfam" id="PF00690">
    <property type="entry name" value="Cation_ATPase_N"/>
    <property type="match status" value="1"/>
</dbReference>
<dbReference type="Pfam" id="PF00122">
    <property type="entry name" value="E1-E2_ATPase"/>
    <property type="match status" value="1"/>
</dbReference>
<dbReference type="Pfam" id="PF00702">
    <property type="entry name" value="Hydrolase"/>
    <property type="match status" value="1"/>
</dbReference>
<dbReference type="PRINTS" id="PR00119">
    <property type="entry name" value="CATATPASE"/>
</dbReference>
<dbReference type="PRINTS" id="PR00121">
    <property type="entry name" value="NAKATPASE"/>
</dbReference>
<dbReference type="SFLD" id="SFLDS00003">
    <property type="entry name" value="Haloacid_Dehalogenase"/>
    <property type="match status" value="1"/>
</dbReference>
<dbReference type="SFLD" id="SFLDF00027">
    <property type="entry name" value="p-type_atpase"/>
    <property type="match status" value="1"/>
</dbReference>
<dbReference type="SMART" id="SM00831">
    <property type="entry name" value="Cation_ATPase_N"/>
    <property type="match status" value="1"/>
</dbReference>
<dbReference type="SUPFAM" id="SSF81653">
    <property type="entry name" value="Calcium ATPase, transduction domain A"/>
    <property type="match status" value="1"/>
</dbReference>
<dbReference type="SUPFAM" id="SSF81665">
    <property type="entry name" value="Calcium ATPase, transmembrane domain M"/>
    <property type="match status" value="1"/>
</dbReference>
<dbReference type="SUPFAM" id="SSF56784">
    <property type="entry name" value="HAD-like"/>
    <property type="match status" value="1"/>
</dbReference>
<dbReference type="SUPFAM" id="SSF81660">
    <property type="entry name" value="Metal cation-transporting ATPase, ATP-binding domain N"/>
    <property type="match status" value="1"/>
</dbReference>
<dbReference type="PROSITE" id="PS00154">
    <property type="entry name" value="ATPASE_E1_E2"/>
    <property type="match status" value="1"/>
</dbReference>
<gene>
    <name type="primary">ATP1A2</name>
    <name type="synonym">KIAA0778</name>
</gene>
<keyword id="KW-0067">ATP-binding</keyword>
<keyword id="KW-1003">Cell membrane</keyword>
<keyword id="KW-0225">Disease variant</keyword>
<keyword id="KW-0887">Epilepsy</keyword>
<keyword id="KW-0991">Intellectual disability</keyword>
<keyword id="KW-0406">Ion transport</keyword>
<keyword id="KW-0460">Magnesium</keyword>
<keyword id="KW-0472">Membrane</keyword>
<keyword id="KW-0479">Metal-binding</keyword>
<keyword id="KW-0547">Nucleotide-binding</keyword>
<keyword id="KW-0597">Phosphoprotein</keyword>
<keyword id="KW-0630">Potassium</keyword>
<keyword id="KW-0633">Potassium transport</keyword>
<keyword id="KW-1267">Proteomics identification</keyword>
<keyword id="KW-1185">Reference proteome</keyword>
<keyword id="KW-0915">Sodium</keyword>
<keyword id="KW-0739">Sodium transport</keyword>
<keyword id="KW-0740">Sodium/potassium transport</keyword>
<keyword id="KW-1278">Translocase</keyword>
<keyword id="KW-0812">Transmembrane</keyword>
<keyword id="KW-1133">Transmembrane helix</keyword>
<keyword id="KW-0813">Transport</keyword>
<accession>P50993</accession>
<accession>D3DVE4</accession>
<accession>Q07059</accession>
<accession>Q5JW74</accession>
<accession>Q86UZ5</accession>
<accession>Q9UQ25</accession>
<comment type="function">
    <text evidence="17">This is the catalytic component of the active enzyme, which catalyzes the hydrolysis of ATP coupled with the exchange of sodium and potassium ions across the plasma membrane. This action creates the electrochemical gradient of sodium and potassium, providing the energy for active transport of various nutrients.</text>
</comment>
<comment type="catalytic activity">
    <reaction>
        <text>K(+)(out) + Na(+)(in) + ATP + H2O = K(+)(in) + Na(+)(out) + ADP + phosphate + H(+)</text>
        <dbReference type="Rhea" id="RHEA:18353"/>
        <dbReference type="ChEBI" id="CHEBI:15377"/>
        <dbReference type="ChEBI" id="CHEBI:15378"/>
        <dbReference type="ChEBI" id="CHEBI:29101"/>
        <dbReference type="ChEBI" id="CHEBI:29103"/>
        <dbReference type="ChEBI" id="CHEBI:30616"/>
        <dbReference type="ChEBI" id="CHEBI:43474"/>
        <dbReference type="ChEBI" id="CHEBI:456216"/>
        <dbReference type="EC" id="7.2.2.13"/>
    </reaction>
</comment>
<comment type="subunit">
    <text evidence="2">The sodium/potassium-transporting ATPase is composed of a catalytic alpha subunit, an auxiliary non-catalytic beta subunit and an additional regulatory subunit. Interacts with regulatory subunit FXYD1.</text>
</comment>
<comment type="subcellular location">
    <subcellularLocation>
        <location evidence="18">Membrane</location>
        <topology evidence="18">Multi-pass membrane protein</topology>
    </subcellularLocation>
    <subcellularLocation>
        <location evidence="18">Cell membrane</location>
        <topology evidence="18">Multi-pass membrane protein</topology>
    </subcellularLocation>
</comment>
<comment type="disease" evidence="8 9 11 12 13">
    <disease id="DI-01571">
        <name>Migraine, familial hemiplegic, 2</name>
        <acronym>FHM2</acronym>
        <description>A subtype of migraine with aura associated with hemiparesis in some families. Migraine is a disabling symptom complex of periodic headaches, usually temporal and unilateral. Headaches are often accompanied by irritability, nausea, vomiting and photophobia, preceded by constriction of the cranial arteries. Migraine with aura is characterized by recurrent attacks of reversible neurological symptoms (aura) that precede or accompany the headache. Aura may include a combination of sensory disturbances, such as blurred vision, hallucinations, vertigo, numbness and difficulty in concentrating and speaking.</description>
        <dbReference type="MIM" id="602481"/>
    </disease>
    <text>The disease is caused by variants affecting the gene represented in this entry.</text>
</comment>
<comment type="disease" evidence="10">
    <disease id="DI-00084">
        <name>Alternating hemiplegia of childhood 1</name>
        <acronym>AHC1</acronym>
        <description>A rare syndrome of episodic hemi- or quadriplegia lasting minutes to days. Most cases are accompanied by dystonic posturing, choreoathetoid movements, nystagmus, other ocular motor abnormalities, autonomic disturbances, and progressive cognitive impairment. It is typically distinguished from familial hemiplegic migraine by infantile onset and high prevalence of associated neurological deficits that become increasingly obvious with age.</description>
        <dbReference type="MIM" id="104290"/>
    </disease>
    <text>The disease is caused by variants affecting the gene represented in this entry.</text>
</comment>
<comment type="disease" evidence="15 16">
    <disease id="DI-06263">
        <name>Fetal akinesia, respiratory insufficiency, microcephaly, polymicrogyria, and dysmorphic facies</name>
        <acronym>FARIMPD</acronym>
        <description>An autosomal recessive disease characterized by fetal akinesia, and generalized joint contractures and arthrogryposis at birth. Affected newborns have severe respiratory insufficiency and significant dysmorphic facial features. Malformations of cortical development are seen on brain imaging, most commonly polymicrogyria or other gyral anomalies. Death usually occurs in infancy.</description>
        <dbReference type="MIM" id="619602"/>
    </disease>
    <text>The disease is caused by variants affecting the gene represented in this entry.</text>
</comment>
<comment type="disease" evidence="14 17">
    <disease id="DI-06264">
        <name>Developmental and epileptic encephalopathy 98</name>
        <acronym>DEE98</acronym>
        <description>A form of epileptic encephalopathy, a heterogeneous group of early-onset epilepsies characterized by refractory seizures, neurodevelopmental impairment, and poor prognosis. Development is normal prior to seizure onset, after which cognitive and motor delays become apparent. DEE98 is an autosomal dominant form characterized by onset of seizures in the first decade.</description>
        <dbReference type="MIM" id="619605"/>
    </disease>
    <text>The disease is caused by variants affecting the gene represented in this entry.</text>
</comment>
<comment type="similarity">
    <text evidence="19">Belongs to the cation transport ATPase (P-type) (TC 3.A.3) family. Type IIC subfamily.</text>
</comment>
<comment type="sequence caution" evidence="19">
    <conflict type="erroneous initiation">
        <sequence resource="EMBL-CDS" id="BAA34498"/>
    </conflict>
    <text>Extended N-terminus.</text>
</comment>
<evidence type="ECO:0000250" key="1"/>
<evidence type="ECO:0000250" key="2">
    <source>
        <dbReference type="UniProtKB" id="A2VDL6"/>
    </source>
</evidence>
<evidence type="ECO:0000250" key="3">
    <source>
        <dbReference type="UniProtKB" id="P06686"/>
    </source>
</evidence>
<evidence type="ECO:0000250" key="4">
    <source>
        <dbReference type="UniProtKB" id="P09626"/>
    </source>
</evidence>
<evidence type="ECO:0000250" key="5">
    <source>
        <dbReference type="UniProtKB" id="Q6PIE5"/>
    </source>
</evidence>
<evidence type="ECO:0000255" key="6"/>
<evidence type="ECO:0000256" key="7">
    <source>
        <dbReference type="SAM" id="MobiDB-lite"/>
    </source>
</evidence>
<evidence type="ECO:0000269" key="8">
    <source>
    </source>
</evidence>
<evidence type="ECO:0000269" key="9">
    <source>
    </source>
</evidence>
<evidence type="ECO:0000269" key="10">
    <source>
    </source>
</evidence>
<evidence type="ECO:0000269" key="11">
    <source>
    </source>
</evidence>
<evidence type="ECO:0000269" key="12">
    <source>
    </source>
</evidence>
<evidence type="ECO:0000269" key="13">
    <source>
    </source>
</evidence>
<evidence type="ECO:0000269" key="14">
    <source>
    </source>
</evidence>
<evidence type="ECO:0000269" key="15">
    <source>
    </source>
</evidence>
<evidence type="ECO:0000269" key="16">
    <source>
    </source>
</evidence>
<evidence type="ECO:0000269" key="17">
    <source>
    </source>
</evidence>
<evidence type="ECO:0000269" key="18">
    <source>
    </source>
</evidence>
<evidence type="ECO:0000305" key="19"/>
<evidence type="ECO:0007744" key="20">
    <source>
    </source>
</evidence>
<protein>
    <recommendedName>
        <fullName>Sodium/potassium-transporting ATPase subunit alpha-2</fullName>
        <shortName>Na(+)/K(+) ATPase alpha-2 subunit</shortName>
        <ecNumber>7.2.2.13</ecNumber>
    </recommendedName>
    <alternativeName>
        <fullName>Sodium pump subunit alpha-2</fullName>
    </alternativeName>
</protein>
<proteinExistence type="evidence at protein level"/>
<reference key="1">
    <citation type="journal article" date="1989" name="J. Biol. Chem.">
        <title>Characterization of the human Na,K-ATPase alpha 2 gene and identification of intragenic restriction fragment length polymorphisms.</title>
        <authorList>
            <person name="Shull M.M."/>
            <person name="Pugh D.G."/>
            <person name="Lingrel J.B."/>
        </authorList>
    </citation>
    <scope>NUCLEOTIDE SEQUENCE [GENOMIC DNA]</scope>
</reference>
<reference key="2">
    <citation type="journal article" date="1998" name="DNA Res.">
        <title>Prediction of the coding sequences of unidentified human genes. XI. The complete sequences of 100 new cDNA clones from brain which code for large proteins in vitro.</title>
        <authorList>
            <person name="Nagase T."/>
            <person name="Ishikawa K."/>
            <person name="Suyama M."/>
            <person name="Kikuno R."/>
            <person name="Miyajima N."/>
            <person name="Tanaka A."/>
            <person name="Kotani H."/>
            <person name="Nomura N."/>
            <person name="Ohara O."/>
        </authorList>
    </citation>
    <scope>NUCLEOTIDE SEQUENCE [LARGE SCALE MRNA]</scope>
    <source>
        <tissue>Brain</tissue>
    </source>
</reference>
<reference key="3">
    <citation type="journal article" date="2006" name="Nature">
        <title>The DNA sequence and biological annotation of human chromosome 1.</title>
        <authorList>
            <person name="Gregory S.G."/>
            <person name="Barlow K.F."/>
            <person name="McLay K.E."/>
            <person name="Kaul R."/>
            <person name="Swarbreck D."/>
            <person name="Dunham A."/>
            <person name="Scott C.E."/>
            <person name="Howe K.L."/>
            <person name="Woodfine K."/>
            <person name="Spencer C.C.A."/>
            <person name="Jones M.C."/>
            <person name="Gillson C."/>
            <person name="Searle S."/>
            <person name="Zhou Y."/>
            <person name="Kokocinski F."/>
            <person name="McDonald L."/>
            <person name="Evans R."/>
            <person name="Phillips K."/>
            <person name="Atkinson A."/>
            <person name="Cooper R."/>
            <person name="Jones C."/>
            <person name="Hall R.E."/>
            <person name="Andrews T.D."/>
            <person name="Lloyd C."/>
            <person name="Ainscough R."/>
            <person name="Almeida J.P."/>
            <person name="Ambrose K.D."/>
            <person name="Anderson F."/>
            <person name="Andrew R.W."/>
            <person name="Ashwell R.I.S."/>
            <person name="Aubin K."/>
            <person name="Babbage A.K."/>
            <person name="Bagguley C.L."/>
            <person name="Bailey J."/>
            <person name="Beasley H."/>
            <person name="Bethel G."/>
            <person name="Bird C.P."/>
            <person name="Bray-Allen S."/>
            <person name="Brown J.Y."/>
            <person name="Brown A.J."/>
            <person name="Buckley D."/>
            <person name="Burton J."/>
            <person name="Bye J."/>
            <person name="Carder C."/>
            <person name="Chapman J.C."/>
            <person name="Clark S.Y."/>
            <person name="Clarke G."/>
            <person name="Clee C."/>
            <person name="Cobley V."/>
            <person name="Collier R.E."/>
            <person name="Corby N."/>
            <person name="Coville G.J."/>
            <person name="Davies J."/>
            <person name="Deadman R."/>
            <person name="Dunn M."/>
            <person name="Earthrowl M."/>
            <person name="Ellington A.G."/>
            <person name="Errington H."/>
            <person name="Frankish A."/>
            <person name="Frankland J."/>
            <person name="French L."/>
            <person name="Garner P."/>
            <person name="Garnett J."/>
            <person name="Gay L."/>
            <person name="Ghori M.R.J."/>
            <person name="Gibson R."/>
            <person name="Gilby L.M."/>
            <person name="Gillett W."/>
            <person name="Glithero R.J."/>
            <person name="Grafham D.V."/>
            <person name="Griffiths C."/>
            <person name="Griffiths-Jones S."/>
            <person name="Grocock R."/>
            <person name="Hammond S."/>
            <person name="Harrison E.S.I."/>
            <person name="Hart E."/>
            <person name="Haugen E."/>
            <person name="Heath P.D."/>
            <person name="Holmes S."/>
            <person name="Holt K."/>
            <person name="Howden P.J."/>
            <person name="Hunt A.R."/>
            <person name="Hunt S.E."/>
            <person name="Hunter G."/>
            <person name="Isherwood J."/>
            <person name="James R."/>
            <person name="Johnson C."/>
            <person name="Johnson D."/>
            <person name="Joy A."/>
            <person name="Kay M."/>
            <person name="Kershaw J.K."/>
            <person name="Kibukawa M."/>
            <person name="Kimberley A.M."/>
            <person name="King A."/>
            <person name="Knights A.J."/>
            <person name="Lad H."/>
            <person name="Laird G."/>
            <person name="Lawlor S."/>
            <person name="Leongamornlert D.A."/>
            <person name="Lloyd D.M."/>
            <person name="Loveland J."/>
            <person name="Lovell J."/>
            <person name="Lush M.J."/>
            <person name="Lyne R."/>
            <person name="Martin S."/>
            <person name="Mashreghi-Mohammadi M."/>
            <person name="Matthews L."/>
            <person name="Matthews N.S.W."/>
            <person name="McLaren S."/>
            <person name="Milne S."/>
            <person name="Mistry S."/>
            <person name="Moore M.J.F."/>
            <person name="Nickerson T."/>
            <person name="O'Dell C.N."/>
            <person name="Oliver K."/>
            <person name="Palmeiri A."/>
            <person name="Palmer S.A."/>
            <person name="Parker A."/>
            <person name="Patel D."/>
            <person name="Pearce A.V."/>
            <person name="Peck A.I."/>
            <person name="Pelan S."/>
            <person name="Phelps K."/>
            <person name="Phillimore B.J."/>
            <person name="Plumb R."/>
            <person name="Rajan J."/>
            <person name="Raymond C."/>
            <person name="Rouse G."/>
            <person name="Saenphimmachak C."/>
            <person name="Sehra H.K."/>
            <person name="Sheridan E."/>
            <person name="Shownkeen R."/>
            <person name="Sims S."/>
            <person name="Skuce C.D."/>
            <person name="Smith M."/>
            <person name="Steward C."/>
            <person name="Subramanian S."/>
            <person name="Sycamore N."/>
            <person name="Tracey A."/>
            <person name="Tromans A."/>
            <person name="Van Helmond Z."/>
            <person name="Wall M."/>
            <person name="Wallis J.M."/>
            <person name="White S."/>
            <person name="Whitehead S.L."/>
            <person name="Wilkinson J.E."/>
            <person name="Willey D.L."/>
            <person name="Williams H."/>
            <person name="Wilming L."/>
            <person name="Wray P.W."/>
            <person name="Wu Z."/>
            <person name="Coulson A."/>
            <person name="Vaudin M."/>
            <person name="Sulston J.E."/>
            <person name="Durbin R.M."/>
            <person name="Hubbard T."/>
            <person name="Wooster R."/>
            <person name="Dunham I."/>
            <person name="Carter N.P."/>
            <person name="McVean G."/>
            <person name="Ross M.T."/>
            <person name="Harrow J."/>
            <person name="Olson M.V."/>
            <person name="Beck S."/>
            <person name="Rogers J."/>
            <person name="Bentley D.R."/>
        </authorList>
    </citation>
    <scope>NUCLEOTIDE SEQUENCE [LARGE SCALE GENOMIC DNA]</scope>
</reference>
<reference key="4">
    <citation type="submission" date="2005-09" db="EMBL/GenBank/DDBJ databases">
        <authorList>
            <person name="Mural R.J."/>
            <person name="Istrail S."/>
            <person name="Sutton G.G."/>
            <person name="Florea L."/>
            <person name="Halpern A.L."/>
            <person name="Mobarry C.M."/>
            <person name="Lippert R."/>
            <person name="Walenz B."/>
            <person name="Shatkay H."/>
            <person name="Dew I."/>
            <person name="Miller J.R."/>
            <person name="Flanigan M.J."/>
            <person name="Edwards N.J."/>
            <person name="Bolanos R."/>
            <person name="Fasulo D."/>
            <person name="Halldorsson B.V."/>
            <person name="Hannenhalli S."/>
            <person name="Turner R."/>
            <person name="Yooseph S."/>
            <person name="Lu F."/>
            <person name="Nusskern D.R."/>
            <person name="Shue B.C."/>
            <person name="Zheng X.H."/>
            <person name="Zhong F."/>
            <person name="Delcher A.L."/>
            <person name="Huson D.H."/>
            <person name="Kravitz S.A."/>
            <person name="Mouchard L."/>
            <person name="Reinert K."/>
            <person name="Remington K.A."/>
            <person name="Clark A.G."/>
            <person name="Waterman M.S."/>
            <person name="Eichler E.E."/>
            <person name="Adams M.D."/>
            <person name="Hunkapiller M.W."/>
            <person name="Myers E.W."/>
            <person name="Venter J.C."/>
        </authorList>
    </citation>
    <scope>NUCLEOTIDE SEQUENCE [LARGE SCALE GENOMIC DNA]</scope>
</reference>
<reference key="5">
    <citation type="journal article" date="2004" name="Genome Res.">
        <title>The status, quality, and expansion of the NIH full-length cDNA project: the Mammalian Gene Collection (MGC).</title>
        <authorList>
            <consortium name="The MGC Project Team"/>
        </authorList>
    </citation>
    <scope>NUCLEOTIDE SEQUENCE [LARGE SCALE MRNA]</scope>
    <source>
        <tissue>Ovary</tissue>
    </source>
</reference>
<reference key="6">
    <citation type="journal article" date="1987" name="Proc. Natl. Acad. Sci. U.S.A.">
        <title>Multiple genes encode the human Na+,K+-ATPase catalytic subunit.</title>
        <authorList>
            <person name="Shull M.M."/>
            <person name="Lingrel J.B."/>
        </authorList>
    </citation>
    <scope>NUCLEOTIDE SEQUENCE [MRNA] OF 211-249</scope>
    <source>
        <tissue>Leukocyte</tissue>
    </source>
</reference>
<reference key="7">
    <citation type="journal article" date="1987" name="FEBS Lett.">
        <title>The family of human Na+,K+-ATPase genes. No less than five genes and/or pseudogenes related to the alpha-subunit.</title>
        <authorList>
            <person name="Sverdlov E.D."/>
            <person name="Monastyrskaya G.S."/>
            <person name="Broude N.E."/>
            <person name="Ushkaryov Y.A."/>
            <person name="Allikmets R.L."/>
            <person name="Melkov A.M."/>
            <person name="Smirnov Y.V."/>
            <person name="Malyshev I.V."/>
            <person name="Dulubova I.E."/>
            <person name="Petrukhin K.E."/>
            <person name="Gryshin A.V."/>
            <person name="Kiyatkin N.I."/>
            <person name="Kostina M.B."/>
            <person name="Sverdlov V.E."/>
            <person name="Modyanov N.N."/>
            <person name="Ovchinnikov Y.A."/>
        </authorList>
    </citation>
    <scope>NUCLEOTIDE SEQUENCE [MRNA] OF 251-442</scope>
    <source>
        <tissue>Brain</tissue>
        <tissue>Placenta</tissue>
    </source>
</reference>
<reference key="8">
    <citation type="journal article" date="1989" name="FEBS Lett.">
        <title>Family of human Na+,K+-ATPase genes. Structure of the putative regulatory region of the alpha+-gene.</title>
        <authorList>
            <person name="Sverdlov E.D."/>
            <person name="Bessarab D.A."/>
            <person name="Malyshev I.V."/>
            <person name="Petrukhin K.E."/>
            <person name="Smirnov Y.V."/>
            <person name="Ushkaryov Y.A."/>
            <person name="Monastyrskaya G.S."/>
            <person name="Broude N.E."/>
            <person name="Modyanov N.N."/>
        </authorList>
    </citation>
    <scope>NUCLEOTIDE SEQUENCE [MRNA] OF 1-4</scope>
</reference>
<reference key="9">
    <citation type="journal article" date="1994" name="Mol. Membr. Biol.">
        <title>Subcellular distribution and immunocytochemical localization of Na,K-ATPase subunit isoforms in human skeletal muscle.</title>
        <authorList>
            <person name="Hundal H.S."/>
            <person name="Maxwell D.L."/>
            <person name="Ahmed A."/>
            <person name="Darakhshan F."/>
            <person name="Mitsumoto Y."/>
            <person name="Klip A."/>
        </authorList>
    </citation>
    <scope>SUBCELLULAR LOCATION</scope>
</reference>
<reference key="10">
    <citation type="journal article" date="2008" name="Proc. Natl. Acad. Sci. U.S.A.">
        <title>A quantitative atlas of mitotic phosphorylation.</title>
        <authorList>
            <person name="Dephoure N."/>
            <person name="Zhou C."/>
            <person name="Villen J."/>
            <person name="Beausoleil S.A."/>
            <person name="Bakalarski C.E."/>
            <person name="Elledge S.J."/>
            <person name="Gygi S.P."/>
        </authorList>
    </citation>
    <scope>PHOSPHORYLATION [LARGE SCALE ANALYSIS] AT THR-570 AND SER-587</scope>
    <scope>IDENTIFICATION BY MASS SPECTROMETRY [LARGE SCALE ANALYSIS]</scope>
    <source>
        <tissue>Cervix carcinoma</tissue>
    </source>
</reference>
<reference key="11">
    <citation type="journal article" date="2003" name="Ann. Neurol.">
        <title>Novel mutations in the Na+, K+-ATPase pump gene ATP1A2 associated with familial hemiplegic migraine and benign familial infantile convulsions.</title>
        <authorList>
            <person name="Vanmolkot K.R.J."/>
            <person name="Kors E.E."/>
            <person name="Hottenga J.-J."/>
            <person name="Terwindt G.M."/>
            <person name="Haan J."/>
            <person name="Hoefnagels W.A.J."/>
            <person name="Black D.F."/>
            <person name="Sandkuijl L.A."/>
            <person name="Frants R.R."/>
            <person name="Ferrari M.D."/>
            <person name="van den Maagdenberg A.M.J.M."/>
        </authorList>
    </citation>
    <scope>VARIANTS FHM2 GLN-689 AND THR-731</scope>
</reference>
<reference key="12">
    <citation type="journal article" date="2003" name="Nat. Genet.">
        <title>Haploinsufficiency of ATP1A2 encoding the Na+/K+ pump alpha2 subunit associated with familial hemiplegic migraine type 2.</title>
        <authorList>
            <person name="De Fusco M."/>
            <person name="Marconi R."/>
            <person name="Silvestri L."/>
            <person name="Atorino L."/>
            <person name="Rampoldi L."/>
            <person name="Morgante L."/>
            <person name="Ballabio A."/>
            <person name="Aridon P."/>
            <person name="Casari G."/>
        </authorList>
    </citation>
    <scope>VARIANTS FHM2 PRO-764 AND ARG-887</scope>
    <scope>CHARACTERIZATION OF VARIANTS FMH2 PRO-764 AND ARG-887</scope>
</reference>
<reference key="13">
    <citation type="journal article" date="2004" name="Ann. Neurol.">
        <title>Alternating hemiplegia of childhood or familial hemiplegic migraine? A novel ATP1A2 mutation.</title>
        <authorList>
            <person name="Swoboda K.J."/>
            <person name="Kanavakis E."/>
            <person name="Xaidara A."/>
            <person name="Johnson J.E."/>
            <person name="Leppert M.F."/>
            <person name="Schlesinger-Massart M.B."/>
            <person name="Ptacek L.J."/>
            <person name="Silver K."/>
            <person name="Youroukos S."/>
        </authorList>
    </citation>
    <scope>VARIANT AHC1 ASN-378</scope>
</reference>
<reference key="14">
    <citation type="journal article" date="2011" name="Headache">
        <title>Prolonged sporadic hemiplegic migraine associated with a novel de novo missense ATP1A2 gene mutation.</title>
        <authorList>
            <person name="De Sanctis S."/>
            <person name="Grieco G.S."/>
            <person name="Breda L."/>
            <person name="Casali C."/>
            <person name="Nozzi M."/>
            <person name="Del Torto M."/>
            <person name="Chiarelli F."/>
            <person name="Verrotti A."/>
        </authorList>
    </citation>
    <scope>VARIANT FHM2 ARG-715</scope>
</reference>
<reference key="15">
    <citation type="journal article" date="2013" name="Cephalalgia">
        <title>Functional characterization of a novel C-terminal ATP1A2 mutation causing hemiplegic migraine and epilepsy.</title>
        <authorList>
            <person name="Pisano T."/>
            <person name="Spiller S."/>
            <person name="Mei D."/>
            <person name="Guerrini R."/>
            <person name="Cianchetti C."/>
            <person name="Friedrich T."/>
            <person name="Pruna D."/>
        </authorList>
    </citation>
    <scope>VARIANT FHM2 TRP-1007</scope>
</reference>
<reference key="16">
    <citation type="journal article" date="2014" name="Cephalalgia">
        <title>A novel ATP1A2 gene mutation in familial hemiplegic migraine and epilepsy.</title>
        <authorList>
            <person name="Costa C."/>
            <person name="Prontera P."/>
            <person name="Sarchielli P."/>
            <person name="Tonelli A."/>
            <person name="Bassi M.T."/>
            <person name="Cupini L.M."/>
            <person name="Caproni S."/>
            <person name="Siliquini S."/>
            <person name="Donti E."/>
            <person name="Calabresi P."/>
        </authorList>
    </citation>
    <scope>VARIANT FHM2 SER-874</scope>
</reference>
<reference key="17">
    <citation type="journal article" date="2017" name="Hum. Mutat.">
        <title>Diagnostic targeted resequencing in 349 patients with drug-resistant pediatric epilepsies identifies causative mutations in 30 different genes.</title>
        <authorList>
            <consortium name="Clinical Study Group"/>
            <person name="Parrini E."/>
            <person name="Marini C."/>
            <person name="Mei D."/>
            <person name="Galuppi A."/>
            <person name="Cellini E."/>
            <person name="Pucatti D."/>
            <person name="Chiti L."/>
            <person name="Rutigliano D."/>
            <person name="Bianchini C."/>
            <person name="Virdo S."/>
            <person name="De Vita D."/>
            <person name="Bigoni S."/>
            <person name="Barba C."/>
            <person name="Mari F."/>
            <person name="Montomoli M."/>
            <person name="Pisano T."/>
            <person name="Rosati A."/>
            <person name="Guerrini R."/>
        </authorList>
    </citation>
    <scope>VARIANTS DEE98 ALA-366 AND TRP-593</scope>
</reference>
<reference key="18">
    <citation type="journal article" date="2019" name="Brain">
        <title>A novel lethal recognizable polymicrogyric syndrome caused by ATP1A2 homozygous truncating variants.</title>
        <authorList>
            <person name="Chatron N."/>
            <person name="Cabet S."/>
            <person name="Alix E."/>
            <person name="Buenerd A."/>
            <person name="Cox P."/>
            <person name="Guibaud L."/>
            <person name="Labalme A."/>
            <person name="Marks P."/>
            <person name="Osio D."/>
            <person name="Putoux A."/>
            <person name="Sanlaville D."/>
            <person name="Lesca G."/>
            <person name="Vasiljevic A."/>
        </authorList>
    </citation>
    <scope>VARIANT FARIMPD 957-GLU--TYR-1020 DEL</scope>
    <scope>INVOLVEMENT IN FARIMPD</scope>
</reference>
<reference key="19">
    <citation type="journal article" date="2020" name="Eur. J. Med. Genet.">
        <title>Biallelic loss of function variants in ATP1A2 cause hydrops fetalis, microcephaly, arthrogryposis and extensive cortical malformations.</title>
        <authorList>
            <person name="Monteiro F.P."/>
            <person name="Curry C.J."/>
            <person name="Hevner R."/>
            <person name="Elliott S."/>
            <person name="Fisher J.H."/>
            <person name="Turocy J."/>
            <person name="Dobyns W.B."/>
            <person name="Costa L.A."/>
            <person name="Freitas E."/>
            <person name="Kitajima J.P."/>
            <person name="Kok F."/>
        </authorList>
    </citation>
    <scope>INVOLVEMENT IN FARIMPD</scope>
</reference>
<reference key="20">
    <citation type="journal article" date="2021" name="Brain">
        <title>ATP1A2- and ATP1A3-associated early profound epileptic encephalopathy and polymicrogyria.</title>
        <authorList>
            <consortium name="ATP1A2/A3-collaborators"/>
            <person name="Vetro A."/>
            <person name="Nielsen H.N."/>
            <person name="Holm R."/>
            <person name="Hevner R.F."/>
            <person name="Parrini E."/>
            <person name="Powis Z."/>
            <person name="Moeller R.S."/>
            <person name="Bellan C."/>
            <person name="Simonati A."/>
            <person name="Lesca G."/>
            <person name="Helbig K.L."/>
            <person name="Palmer E.E."/>
            <person name="Mei D."/>
            <person name="Ballardini E."/>
            <person name="Van Haeringen A."/>
            <person name="Syrbe S."/>
            <person name="Leuzzi V."/>
            <person name="Cioni G."/>
            <person name="Curry C.J."/>
            <person name="Costain G."/>
            <person name="Santucci M."/>
            <person name="Chong K."/>
            <person name="Mancini G.M.S."/>
            <person name="Clayton-Smith J."/>
            <person name="Bigoni S."/>
            <person name="Scheffer I.E."/>
            <person name="Dobyns W.B."/>
            <person name="Vilsen B."/>
            <person name="Guerrini R."/>
        </authorList>
    </citation>
    <scope>VARIANTS DEE98 MET-293; PHE-341; ALA-366 AND GLN-908</scope>
    <scope>INVOLVEMENT IN DEE98</scope>
    <scope>FUNCTION</scope>
    <scope>CHARACTERIZATION OF VARIANTS DEE98 MET-293; ALA-366 AND GLN-908</scope>
    <scope>VARIANT GLN-593</scope>
    <scope>CHARACTERIZATION OF VARIANT GLN-593</scope>
</reference>
<sequence length="1020" mass="112265">MGRGAGREYSPAATTAENGGGKKKQKEKELDELKKEVAMDDHKLSLDELGRKYQVDLSKGLTNQRAQDVLARDGPNALTPPPTTPEWVKFCRQLFGGFSILLWIGAILCFLAYGIQAAMEDEPSNDNLYLGVVLAAVVIVTGCFSYYQEAKSSKIMDSFKNMVPQQALVIREGEKMQINAEEVVVGDLVEVKGGDRVPADLRIISSHGCKVDNSSLTGESEPQTRSPEFTHENPLETRNICFFSTNCVEGTARGIVIATGDRTVMGRIATLASGLEVGRTPIAMEIEHFIQLITGVAVFLGVSFFVLSLILGYSWLEAVIFLIGIIVANVPEGLLATVTVCLTLTAKRMARKNCLVKNLEAVETLGSTSTICSDKTGTLTQNRMTVAHMWFDNQIHEADTTEDQSGATFDKRSPTWTALSRIAGLCNRAVFKAGQENISVSKRDTAGDASESALLKCIELSCGSVRKMRDRNPKVAEIPFNSTNKYQLSIHEREDSPQSHVLVMKGAPERILDRCSTILVQGKEIPLDKEMQDAFQNAYMELGGLGERVLGFCQLNLPSGKFPRGFKFDTDELNFPTEKLCFVGLMSMIDPPRAAVPDAVGKCRSAGIKVIMVTGDHPITAKAIAKGVGIISEGNETVEDIAARLNIPMSQVNPREAKACVVHGSDLKDMTSEQLDEILKNHTEIVFARTSPQQKLIIVEGCQRQGAIVAVTGDGVNDSPALKKADIGIAMGISGSDVSKQAADMILLDDNFASIVTGVEEGRLIFDNLKKSIAYTLTSNIPEITPFLLFIIANIPLPLGTVTILCIDLGTDMVPAISLAYEAAESDIMKRQPRNSQTDKLVNERLISMAYGQIGMIQALGGFFTYFVILAENGFLPSRLLGIRLDWDDRTMNDLEDSYGQEWTYEQRKVVEFTCHTAFFASIVVVQWADLIICKTRRNSVFQQGMKNKILIFGLLEETALAAFLSYCPGMGVALRMYPLKVTWWFCAFPYSLLIFIYDEVRKLILRRYPGGWVEKETYY</sequence>
<name>AT1A2_HUMAN</name>